<evidence type="ECO:0000255" key="1">
    <source>
        <dbReference type="HAMAP-Rule" id="MF_01588"/>
    </source>
</evidence>
<proteinExistence type="inferred from homology"/>
<gene>
    <name evidence="1" type="primary">ligA</name>
    <name type="ordered locus">GOX0168</name>
</gene>
<accession>Q5FUI5</accession>
<name>DNLJ_GLUOX</name>
<feature type="chain" id="PRO_0000313252" description="DNA ligase">
    <location>
        <begin position="1"/>
        <end position="683"/>
    </location>
</feature>
<feature type="domain" description="BRCT" evidence="1">
    <location>
        <begin position="605"/>
        <end position="683"/>
    </location>
</feature>
<feature type="active site" description="N6-AMP-lysine intermediate" evidence="1">
    <location>
        <position position="123"/>
    </location>
</feature>
<feature type="binding site" evidence="1">
    <location>
        <begin position="36"/>
        <end position="40"/>
    </location>
    <ligand>
        <name>NAD(+)</name>
        <dbReference type="ChEBI" id="CHEBI:57540"/>
    </ligand>
</feature>
<feature type="binding site" evidence="1">
    <location>
        <begin position="85"/>
        <end position="86"/>
    </location>
    <ligand>
        <name>NAD(+)</name>
        <dbReference type="ChEBI" id="CHEBI:57540"/>
    </ligand>
</feature>
<feature type="binding site" evidence="1">
    <location>
        <position position="121"/>
    </location>
    <ligand>
        <name>NAD(+)</name>
        <dbReference type="ChEBI" id="CHEBI:57540"/>
    </ligand>
</feature>
<feature type="binding site" evidence="1">
    <location>
        <position position="144"/>
    </location>
    <ligand>
        <name>NAD(+)</name>
        <dbReference type="ChEBI" id="CHEBI:57540"/>
    </ligand>
</feature>
<feature type="binding site" evidence="1">
    <location>
        <position position="180"/>
    </location>
    <ligand>
        <name>NAD(+)</name>
        <dbReference type="ChEBI" id="CHEBI:57540"/>
    </ligand>
</feature>
<feature type="binding site" evidence="1">
    <location>
        <position position="296"/>
    </location>
    <ligand>
        <name>NAD(+)</name>
        <dbReference type="ChEBI" id="CHEBI:57540"/>
    </ligand>
</feature>
<feature type="binding site" evidence="1">
    <location>
        <position position="320"/>
    </location>
    <ligand>
        <name>NAD(+)</name>
        <dbReference type="ChEBI" id="CHEBI:57540"/>
    </ligand>
</feature>
<feature type="binding site" evidence="1">
    <location>
        <position position="413"/>
    </location>
    <ligand>
        <name>Zn(2+)</name>
        <dbReference type="ChEBI" id="CHEBI:29105"/>
    </ligand>
</feature>
<feature type="binding site" evidence="1">
    <location>
        <position position="416"/>
    </location>
    <ligand>
        <name>Zn(2+)</name>
        <dbReference type="ChEBI" id="CHEBI:29105"/>
    </ligand>
</feature>
<feature type="binding site" evidence="1">
    <location>
        <position position="431"/>
    </location>
    <ligand>
        <name>Zn(2+)</name>
        <dbReference type="ChEBI" id="CHEBI:29105"/>
    </ligand>
</feature>
<feature type="binding site" evidence="1">
    <location>
        <position position="437"/>
    </location>
    <ligand>
        <name>Zn(2+)</name>
        <dbReference type="ChEBI" id="CHEBI:29105"/>
    </ligand>
</feature>
<keyword id="KW-0227">DNA damage</keyword>
<keyword id="KW-0234">DNA repair</keyword>
<keyword id="KW-0235">DNA replication</keyword>
<keyword id="KW-0436">Ligase</keyword>
<keyword id="KW-0460">Magnesium</keyword>
<keyword id="KW-0464">Manganese</keyword>
<keyword id="KW-0479">Metal-binding</keyword>
<keyword id="KW-0520">NAD</keyword>
<keyword id="KW-1185">Reference proteome</keyword>
<keyword id="KW-0862">Zinc</keyword>
<protein>
    <recommendedName>
        <fullName evidence="1">DNA ligase</fullName>
        <ecNumber evidence="1">6.5.1.2</ecNumber>
    </recommendedName>
    <alternativeName>
        <fullName evidence="1">Polydeoxyribonucleotide synthase [NAD(+)]</fullName>
    </alternativeName>
</protein>
<sequence length="683" mass="75381">MTTAPVSAAERHAALEADLAQWDEAYHGRDEPEVSDAVYDAARRELLALEEAYPDLRSQEGASQRVGATPDSAFGKYRHLVPMLSLDNVFDPEGFDGFVSRVGRFLGLDEDGLQALQFVAEPKIDGLSISLTYEHGHFVRGTTRGDGIEGEDVTANLLTLKDIPRELPGEAPERVEIRGEVFLSKSSFLTLNEQQVARGAKPFANPRNAAAGSLRQLDAEITRSRPLSLFAYAQGYTSSPVATTHWDYLEKLRSWGFTVNPLSQMIAHARDIPAYVEKLARERSELDYDIDGIVFKLDDLSLQDRLGFAGRAPRWAIAWKFPAEQAITRLREIEIQVGRTGALTPVAHLEPVNVGGVIVSRATLHNEDEIARKDVRVGDLVRLQRAGDVIPQILGPVPSEEPRSEPFVYPDHCPVCGSLAERVHGEAVRRCTGGLTCEAQIVERLIHMVSRNAFDIDGLGERSIREFYDAGYIRRPGDIFRLRQHEEALLQRDGWGRLSVDNLFRAIEDRRTIPLSRLIFGLGIRRIGERNAQLLARHYQTFENWRTAMLAARPDSEERASLGAIMGVGDAIADELSAFFSESHNIETLDDLALELKDIIAEEAPSEGHLSGKVIVFTGTLTTMSRPEAKAIAERLGAQVTDSVSKKTSLVVLGEKAGSKAKKAAELGIETVDESGWRVLAGL</sequence>
<organism>
    <name type="scientific">Gluconobacter oxydans (strain 621H)</name>
    <name type="common">Gluconobacter suboxydans</name>
    <dbReference type="NCBI Taxonomy" id="290633"/>
    <lineage>
        <taxon>Bacteria</taxon>
        <taxon>Pseudomonadati</taxon>
        <taxon>Pseudomonadota</taxon>
        <taxon>Alphaproteobacteria</taxon>
        <taxon>Acetobacterales</taxon>
        <taxon>Acetobacteraceae</taxon>
        <taxon>Gluconobacter</taxon>
    </lineage>
</organism>
<comment type="function">
    <text evidence="1">DNA ligase that catalyzes the formation of phosphodiester linkages between 5'-phosphoryl and 3'-hydroxyl groups in double-stranded DNA using NAD as a coenzyme and as the energy source for the reaction. It is essential for DNA replication and repair of damaged DNA.</text>
</comment>
<comment type="catalytic activity">
    <reaction evidence="1">
        <text>NAD(+) + (deoxyribonucleotide)n-3'-hydroxyl + 5'-phospho-(deoxyribonucleotide)m = (deoxyribonucleotide)n+m + AMP + beta-nicotinamide D-nucleotide.</text>
        <dbReference type="EC" id="6.5.1.2"/>
    </reaction>
</comment>
<comment type="cofactor">
    <cofactor evidence="1">
        <name>Mg(2+)</name>
        <dbReference type="ChEBI" id="CHEBI:18420"/>
    </cofactor>
    <cofactor evidence="1">
        <name>Mn(2+)</name>
        <dbReference type="ChEBI" id="CHEBI:29035"/>
    </cofactor>
</comment>
<comment type="similarity">
    <text evidence="1">Belongs to the NAD-dependent DNA ligase family. LigA subfamily.</text>
</comment>
<dbReference type="EC" id="6.5.1.2" evidence="1"/>
<dbReference type="EMBL" id="CP000009">
    <property type="protein sequence ID" value="AAW59961.1"/>
    <property type="molecule type" value="Genomic_DNA"/>
</dbReference>
<dbReference type="RefSeq" id="WP_011251764.1">
    <property type="nucleotide sequence ID" value="NC_006677.1"/>
</dbReference>
<dbReference type="SMR" id="Q5FUI5"/>
<dbReference type="STRING" id="290633.GOX0168"/>
<dbReference type="KEGG" id="gox:GOX0168"/>
<dbReference type="eggNOG" id="COG0272">
    <property type="taxonomic scope" value="Bacteria"/>
</dbReference>
<dbReference type="HOGENOM" id="CLU_007764_2_1_5"/>
<dbReference type="Proteomes" id="UP000006375">
    <property type="component" value="Chromosome"/>
</dbReference>
<dbReference type="GO" id="GO:0005829">
    <property type="term" value="C:cytosol"/>
    <property type="evidence" value="ECO:0007669"/>
    <property type="project" value="TreeGrafter"/>
</dbReference>
<dbReference type="GO" id="GO:0003911">
    <property type="term" value="F:DNA ligase (NAD+) activity"/>
    <property type="evidence" value="ECO:0007669"/>
    <property type="project" value="UniProtKB-UniRule"/>
</dbReference>
<dbReference type="GO" id="GO:0046872">
    <property type="term" value="F:metal ion binding"/>
    <property type="evidence" value="ECO:0007669"/>
    <property type="project" value="UniProtKB-KW"/>
</dbReference>
<dbReference type="GO" id="GO:0006281">
    <property type="term" value="P:DNA repair"/>
    <property type="evidence" value="ECO:0007669"/>
    <property type="project" value="UniProtKB-KW"/>
</dbReference>
<dbReference type="GO" id="GO:0006260">
    <property type="term" value="P:DNA replication"/>
    <property type="evidence" value="ECO:0007669"/>
    <property type="project" value="UniProtKB-KW"/>
</dbReference>
<dbReference type="CDD" id="cd17748">
    <property type="entry name" value="BRCT_DNA_ligase_like"/>
    <property type="match status" value="1"/>
</dbReference>
<dbReference type="CDD" id="cd00114">
    <property type="entry name" value="LIGANc"/>
    <property type="match status" value="1"/>
</dbReference>
<dbReference type="FunFam" id="2.40.50.140:FF:000012">
    <property type="entry name" value="DNA ligase"/>
    <property type="match status" value="1"/>
</dbReference>
<dbReference type="FunFam" id="3.30.470.30:FF:000001">
    <property type="entry name" value="DNA ligase"/>
    <property type="match status" value="1"/>
</dbReference>
<dbReference type="Gene3D" id="6.20.10.30">
    <property type="match status" value="1"/>
</dbReference>
<dbReference type="Gene3D" id="1.10.150.20">
    <property type="entry name" value="5' to 3' exonuclease, C-terminal subdomain"/>
    <property type="match status" value="2"/>
</dbReference>
<dbReference type="Gene3D" id="3.40.50.10190">
    <property type="entry name" value="BRCT domain"/>
    <property type="match status" value="1"/>
</dbReference>
<dbReference type="Gene3D" id="3.30.470.30">
    <property type="entry name" value="DNA ligase/mRNA capping enzyme"/>
    <property type="match status" value="1"/>
</dbReference>
<dbReference type="Gene3D" id="1.10.287.610">
    <property type="entry name" value="Helix hairpin bin"/>
    <property type="match status" value="1"/>
</dbReference>
<dbReference type="Gene3D" id="2.40.50.140">
    <property type="entry name" value="Nucleic acid-binding proteins"/>
    <property type="match status" value="1"/>
</dbReference>
<dbReference type="HAMAP" id="MF_01588">
    <property type="entry name" value="DNA_ligase_A"/>
    <property type="match status" value="1"/>
</dbReference>
<dbReference type="InterPro" id="IPR001357">
    <property type="entry name" value="BRCT_dom"/>
</dbReference>
<dbReference type="InterPro" id="IPR036420">
    <property type="entry name" value="BRCT_dom_sf"/>
</dbReference>
<dbReference type="InterPro" id="IPR041663">
    <property type="entry name" value="DisA/LigA_HHH"/>
</dbReference>
<dbReference type="InterPro" id="IPR001679">
    <property type="entry name" value="DNA_ligase"/>
</dbReference>
<dbReference type="InterPro" id="IPR018239">
    <property type="entry name" value="DNA_ligase_AS"/>
</dbReference>
<dbReference type="InterPro" id="IPR033136">
    <property type="entry name" value="DNA_ligase_CS"/>
</dbReference>
<dbReference type="InterPro" id="IPR013839">
    <property type="entry name" value="DNAligase_adenylation"/>
</dbReference>
<dbReference type="InterPro" id="IPR013840">
    <property type="entry name" value="DNAligase_N"/>
</dbReference>
<dbReference type="InterPro" id="IPR012340">
    <property type="entry name" value="NA-bd_OB-fold"/>
</dbReference>
<dbReference type="InterPro" id="IPR004150">
    <property type="entry name" value="NAD_DNA_ligase_OB"/>
</dbReference>
<dbReference type="InterPro" id="IPR010994">
    <property type="entry name" value="RuvA_2-like"/>
</dbReference>
<dbReference type="InterPro" id="IPR004149">
    <property type="entry name" value="Znf_DNAligase_C4"/>
</dbReference>
<dbReference type="NCBIfam" id="TIGR00575">
    <property type="entry name" value="dnlj"/>
    <property type="match status" value="1"/>
</dbReference>
<dbReference type="NCBIfam" id="NF005932">
    <property type="entry name" value="PRK07956.1"/>
    <property type="match status" value="1"/>
</dbReference>
<dbReference type="PANTHER" id="PTHR23389">
    <property type="entry name" value="CHROMOSOME TRANSMISSION FIDELITY FACTOR 18"/>
    <property type="match status" value="1"/>
</dbReference>
<dbReference type="PANTHER" id="PTHR23389:SF9">
    <property type="entry name" value="DNA LIGASE"/>
    <property type="match status" value="1"/>
</dbReference>
<dbReference type="Pfam" id="PF00533">
    <property type="entry name" value="BRCT"/>
    <property type="match status" value="1"/>
</dbReference>
<dbReference type="Pfam" id="PF01653">
    <property type="entry name" value="DNA_ligase_aden"/>
    <property type="match status" value="1"/>
</dbReference>
<dbReference type="Pfam" id="PF03120">
    <property type="entry name" value="DNA_ligase_OB"/>
    <property type="match status" value="1"/>
</dbReference>
<dbReference type="Pfam" id="PF03119">
    <property type="entry name" value="DNA_ligase_ZBD"/>
    <property type="match status" value="1"/>
</dbReference>
<dbReference type="Pfam" id="PF12826">
    <property type="entry name" value="HHH_2"/>
    <property type="match status" value="1"/>
</dbReference>
<dbReference type="PIRSF" id="PIRSF001604">
    <property type="entry name" value="LigA"/>
    <property type="match status" value="1"/>
</dbReference>
<dbReference type="SMART" id="SM00292">
    <property type="entry name" value="BRCT"/>
    <property type="match status" value="1"/>
</dbReference>
<dbReference type="SMART" id="SM00532">
    <property type="entry name" value="LIGANc"/>
    <property type="match status" value="1"/>
</dbReference>
<dbReference type="SUPFAM" id="SSF52113">
    <property type="entry name" value="BRCT domain"/>
    <property type="match status" value="1"/>
</dbReference>
<dbReference type="SUPFAM" id="SSF56091">
    <property type="entry name" value="DNA ligase/mRNA capping enzyme, catalytic domain"/>
    <property type="match status" value="1"/>
</dbReference>
<dbReference type="SUPFAM" id="SSF50249">
    <property type="entry name" value="Nucleic acid-binding proteins"/>
    <property type="match status" value="1"/>
</dbReference>
<dbReference type="SUPFAM" id="SSF47781">
    <property type="entry name" value="RuvA domain 2-like"/>
    <property type="match status" value="1"/>
</dbReference>
<dbReference type="PROSITE" id="PS50172">
    <property type="entry name" value="BRCT"/>
    <property type="match status" value="1"/>
</dbReference>
<dbReference type="PROSITE" id="PS01055">
    <property type="entry name" value="DNA_LIGASE_N1"/>
    <property type="match status" value="1"/>
</dbReference>
<dbReference type="PROSITE" id="PS01056">
    <property type="entry name" value="DNA_LIGASE_N2"/>
    <property type="match status" value="1"/>
</dbReference>
<reference key="1">
    <citation type="journal article" date="2005" name="Nat. Biotechnol.">
        <title>Complete genome sequence of the acetic acid bacterium Gluconobacter oxydans.</title>
        <authorList>
            <person name="Prust C."/>
            <person name="Hoffmeister M."/>
            <person name="Liesegang H."/>
            <person name="Wiezer A."/>
            <person name="Fricke W.F."/>
            <person name="Ehrenreich A."/>
            <person name="Gottschalk G."/>
            <person name="Deppenmeier U."/>
        </authorList>
    </citation>
    <scope>NUCLEOTIDE SEQUENCE [LARGE SCALE GENOMIC DNA]</scope>
    <source>
        <strain>621H</strain>
    </source>
</reference>